<comment type="function">
    <text evidence="1">Involved in iron-sulfur cluster biogenesis. Binds a 4Fe-4S cluster, can transfer this cluster to apoproteins, and thereby intervenes in the maturation of Fe/S proteins. Could also act as a scaffold/chaperone for damaged Fe/S proteins.</text>
</comment>
<comment type="cofactor">
    <cofactor evidence="1">
        <name>[4Fe-4S] cluster</name>
        <dbReference type="ChEBI" id="CHEBI:49883"/>
    </cofactor>
    <text evidence="1">Binds 1 [4Fe-4S] cluster per subunit. The cluster is presumably bound at the interface of two monomers.</text>
</comment>
<comment type="subunit">
    <text evidence="1">Homodimer.</text>
</comment>
<comment type="similarity">
    <text evidence="1">Belongs to the NfuA family.</text>
</comment>
<proteinExistence type="inferred from homology"/>
<protein>
    <recommendedName>
        <fullName evidence="1">Fe/S biogenesis protein NfuA</fullName>
    </recommendedName>
</protein>
<dbReference type="EMBL" id="AM933172">
    <property type="protein sequence ID" value="CAR34912.1"/>
    <property type="molecule type" value="Genomic_DNA"/>
</dbReference>
<dbReference type="RefSeq" id="WP_000619387.1">
    <property type="nucleotide sequence ID" value="NC_011294.1"/>
</dbReference>
<dbReference type="SMR" id="B5R371"/>
<dbReference type="GeneID" id="66757844"/>
<dbReference type="KEGG" id="set:SEN3337"/>
<dbReference type="HOGENOM" id="CLU_094569_0_0_6"/>
<dbReference type="Proteomes" id="UP000000613">
    <property type="component" value="Chromosome"/>
</dbReference>
<dbReference type="GO" id="GO:0051539">
    <property type="term" value="F:4 iron, 4 sulfur cluster binding"/>
    <property type="evidence" value="ECO:0007669"/>
    <property type="project" value="UniProtKB-UniRule"/>
</dbReference>
<dbReference type="GO" id="GO:0005506">
    <property type="term" value="F:iron ion binding"/>
    <property type="evidence" value="ECO:0007669"/>
    <property type="project" value="InterPro"/>
</dbReference>
<dbReference type="GO" id="GO:0016226">
    <property type="term" value="P:iron-sulfur cluster assembly"/>
    <property type="evidence" value="ECO:0007669"/>
    <property type="project" value="UniProtKB-UniRule"/>
</dbReference>
<dbReference type="GO" id="GO:0051604">
    <property type="term" value="P:protein maturation"/>
    <property type="evidence" value="ECO:0007669"/>
    <property type="project" value="UniProtKB-UniRule"/>
</dbReference>
<dbReference type="FunFam" id="2.60.300.12:FF:000004">
    <property type="entry name" value="Fe/S biogenesis protein NfuA"/>
    <property type="match status" value="1"/>
</dbReference>
<dbReference type="FunFam" id="3.30.300.130:FF:000002">
    <property type="entry name" value="Fe/S biogenesis protein NfuA"/>
    <property type="match status" value="1"/>
</dbReference>
<dbReference type="Gene3D" id="3.30.300.130">
    <property type="entry name" value="Fe-S cluster assembly (FSCA)"/>
    <property type="match status" value="1"/>
</dbReference>
<dbReference type="Gene3D" id="2.60.300.12">
    <property type="entry name" value="HesB-like domain"/>
    <property type="match status" value="1"/>
</dbReference>
<dbReference type="HAMAP" id="MF_01637">
    <property type="entry name" value="Fe_S_biogen_NfuA"/>
    <property type="match status" value="1"/>
</dbReference>
<dbReference type="InterPro" id="IPR017726">
    <property type="entry name" value="Fe/S_biogenesis_protein_NfuA"/>
</dbReference>
<dbReference type="InterPro" id="IPR000361">
    <property type="entry name" value="FeS_biogenesis"/>
</dbReference>
<dbReference type="InterPro" id="IPR034904">
    <property type="entry name" value="FSCA_dom_sf"/>
</dbReference>
<dbReference type="InterPro" id="IPR035903">
    <property type="entry name" value="HesB-like_dom_sf"/>
</dbReference>
<dbReference type="InterPro" id="IPR001075">
    <property type="entry name" value="NIF_FeS_clus_asmbl_NifU_C"/>
</dbReference>
<dbReference type="NCBIfam" id="NF008392">
    <property type="entry name" value="PRK11190.1"/>
    <property type="match status" value="1"/>
</dbReference>
<dbReference type="NCBIfam" id="TIGR03341">
    <property type="entry name" value="YhgI_GntY"/>
    <property type="match status" value="1"/>
</dbReference>
<dbReference type="PANTHER" id="PTHR11178:SF51">
    <property type="entry name" value="FE_S BIOGENESIS PROTEIN NFUA"/>
    <property type="match status" value="1"/>
</dbReference>
<dbReference type="PANTHER" id="PTHR11178">
    <property type="entry name" value="IRON-SULFUR CLUSTER SCAFFOLD PROTEIN NFU-RELATED"/>
    <property type="match status" value="1"/>
</dbReference>
<dbReference type="Pfam" id="PF01521">
    <property type="entry name" value="Fe-S_biosyn"/>
    <property type="match status" value="1"/>
</dbReference>
<dbReference type="Pfam" id="PF01106">
    <property type="entry name" value="NifU"/>
    <property type="match status" value="1"/>
</dbReference>
<dbReference type="SUPFAM" id="SSF117916">
    <property type="entry name" value="Fe-S cluster assembly (FSCA) domain-like"/>
    <property type="match status" value="1"/>
</dbReference>
<dbReference type="SUPFAM" id="SSF89360">
    <property type="entry name" value="HesB-like domain"/>
    <property type="match status" value="1"/>
</dbReference>
<name>NFUA_SALEP</name>
<reference key="1">
    <citation type="journal article" date="2008" name="Genome Res.">
        <title>Comparative genome analysis of Salmonella enteritidis PT4 and Salmonella gallinarum 287/91 provides insights into evolutionary and host adaptation pathways.</title>
        <authorList>
            <person name="Thomson N.R."/>
            <person name="Clayton D.J."/>
            <person name="Windhorst D."/>
            <person name="Vernikos G."/>
            <person name="Davidson S."/>
            <person name="Churcher C."/>
            <person name="Quail M.A."/>
            <person name="Stevens M."/>
            <person name="Jones M.A."/>
            <person name="Watson M."/>
            <person name="Barron A."/>
            <person name="Layton A."/>
            <person name="Pickard D."/>
            <person name="Kingsley R.A."/>
            <person name="Bignell A."/>
            <person name="Clark L."/>
            <person name="Harris B."/>
            <person name="Ormond D."/>
            <person name="Abdellah Z."/>
            <person name="Brooks K."/>
            <person name="Cherevach I."/>
            <person name="Chillingworth T."/>
            <person name="Woodward J."/>
            <person name="Norberczak H."/>
            <person name="Lord A."/>
            <person name="Arrowsmith C."/>
            <person name="Jagels K."/>
            <person name="Moule S."/>
            <person name="Mungall K."/>
            <person name="Saunders M."/>
            <person name="Whitehead S."/>
            <person name="Chabalgoity J.A."/>
            <person name="Maskell D."/>
            <person name="Humphreys T."/>
            <person name="Roberts M."/>
            <person name="Barrow P.A."/>
            <person name="Dougan G."/>
            <person name="Parkhill J."/>
        </authorList>
    </citation>
    <scope>NUCLEOTIDE SEQUENCE [LARGE SCALE GENOMIC DNA]</scope>
    <source>
        <strain>P125109</strain>
    </source>
</reference>
<evidence type="ECO:0000255" key="1">
    <source>
        <dbReference type="HAMAP-Rule" id="MF_01637"/>
    </source>
</evidence>
<keyword id="KW-0004">4Fe-4S</keyword>
<keyword id="KW-0408">Iron</keyword>
<keyword id="KW-0411">Iron-sulfur</keyword>
<keyword id="KW-0479">Metal-binding</keyword>
<gene>
    <name evidence="1" type="primary">nfuA</name>
    <name type="ordered locus">SEN3337</name>
</gene>
<feature type="chain" id="PRO_1000186772" description="Fe/S biogenesis protein NfuA">
    <location>
        <begin position="1"/>
        <end position="191"/>
    </location>
</feature>
<feature type="binding site" evidence="1">
    <location>
        <position position="149"/>
    </location>
    <ligand>
        <name>[4Fe-4S] cluster</name>
        <dbReference type="ChEBI" id="CHEBI:49883"/>
    </ligand>
</feature>
<feature type="binding site" evidence="1">
    <location>
        <position position="152"/>
    </location>
    <ligand>
        <name>[4Fe-4S] cluster</name>
        <dbReference type="ChEBI" id="CHEBI:49883"/>
    </ligand>
</feature>
<sequence length="191" mass="20938">MIRISDAAQAHFAKLLANQEEGTQIRVFVINPGTPNAECGVSYCPPDAVEATDTALKFDLLTAYVDELSAPYLEDAEIDFVTDQLGSQLTLKAPNAKMRKVADDAPLMERVEYALQSQINPQLAGHGGRVSLMEITDEGYAILQFGGGCNGCSMVDVTLKEGIEKQLLNEFPELKGVRDLTEHQRGEHSYY</sequence>
<accession>B5R371</accession>
<organism>
    <name type="scientific">Salmonella enteritidis PT4 (strain P125109)</name>
    <dbReference type="NCBI Taxonomy" id="550537"/>
    <lineage>
        <taxon>Bacteria</taxon>
        <taxon>Pseudomonadati</taxon>
        <taxon>Pseudomonadota</taxon>
        <taxon>Gammaproteobacteria</taxon>
        <taxon>Enterobacterales</taxon>
        <taxon>Enterobacteriaceae</taxon>
        <taxon>Salmonella</taxon>
    </lineage>
</organism>